<organism>
    <name type="scientific">Vibrio vulnificus (strain CMCP6)</name>
    <dbReference type="NCBI Taxonomy" id="216895"/>
    <lineage>
        <taxon>Bacteria</taxon>
        <taxon>Pseudomonadati</taxon>
        <taxon>Pseudomonadota</taxon>
        <taxon>Gammaproteobacteria</taxon>
        <taxon>Vibrionales</taxon>
        <taxon>Vibrionaceae</taxon>
        <taxon>Vibrio</taxon>
    </lineage>
</organism>
<protein>
    <recommendedName>
        <fullName evidence="1">Deoxyribose-phosphate aldolase</fullName>
        <shortName evidence="1">DERA</shortName>
        <ecNumber evidence="1">4.1.2.4</ecNumber>
    </recommendedName>
    <alternativeName>
        <fullName evidence="1">2-deoxy-D-ribose 5-phosphate aldolase</fullName>
    </alternativeName>
    <alternativeName>
        <fullName evidence="1">Phosphodeoxyriboaldolase</fullName>
        <shortName evidence="1">Deoxyriboaldolase</shortName>
    </alternativeName>
</protein>
<evidence type="ECO:0000255" key="1">
    <source>
        <dbReference type="HAMAP-Rule" id="MF_00592"/>
    </source>
</evidence>
<feature type="chain" id="PRO_0000057307" description="Deoxyribose-phosphate aldolase">
    <location>
        <begin position="1"/>
        <end position="258"/>
    </location>
</feature>
<feature type="active site" description="Proton donor/acceptor" evidence="1">
    <location>
        <position position="102"/>
    </location>
</feature>
<feature type="active site" description="Schiff-base intermediate with acetaldehyde" evidence="1">
    <location>
        <position position="165"/>
    </location>
</feature>
<feature type="active site" description="Proton donor/acceptor" evidence="1">
    <location>
        <position position="199"/>
    </location>
</feature>
<gene>
    <name evidence="1" type="primary">deoC</name>
    <name type="ordered locus">VV1_1725</name>
</gene>
<name>DEOC_VIBVU</name>
<proteinExistence type="inferred from homology"/>
<dbReference type="EC" id="4.1.2.4" evidence="1"/>
<dbReference type="EMBL" id="AE016795">
    <property type="protein sequence ID" value="AAO10140.1"/>
    <property type="molecule type" value="Genomic_DNA"/>
</dbReference>
<dbReference type="RefSeq" id="WP_011079642.1">
    <property type="nucleotide sequence ID" value="NC_004459.3"/>
</dbReference>
<dbReference type="SMR" id="Q8DBT2"/>
<dbReference type="KEGG" id="vvu:VV1_1725"/>
<dbReference type="HOGENOM" id="CLU_053595_3_1_6"/>
<dbReference type="UniPathway" id="UPA00002">
    <property type="reaction ID" value="UER00468"/>
</dbReference>
<dbReference type="Proteomes" id="UP000002275">
    <property type="component" value="Chromosome 1"/>
</dbReference>
<dbReference type="GO" id="GO:0005737">
    <property type="term" value="C:cytoplasm"/>
    <property type="evidence" value="ECO:0007669"/>
    <property type="project" value="UniProtKB-SubCell"/>
</dbReference>
<dbReference type="GO" id="GO:0004139">
    <property type="term" value="F:deoxyribose-phosphate aldolase activity"/>
    <property type="evidence" value="ECO:0007669"/>
    <property type="project" value="UniProtKB-UniRule"/>
</dbReference>
<dbReference type="GO" id="GO:0006018">
    <property type="term" value="P:2-deoxyribose 1-phosphate catabolic process"/>
    <property type="evidence" value="ECO:0007669"/>
    <property type="project" value="UniProtKB-UniRule"/>
</dbReference>
<dbReference type="GO" id="GO:0016052">
    <property type="term" value="P:carbohydrate catabolic process"/>
    <property type="evidence" value="ECO:0007669"/>
    <property type="project" value="TreeGrafter"/>
</dbReference>
<dbReference type="GO" id="GO:0009264">
    <property type="term" value="P:deoxyribonucleotide catabolic process"/>
    <property type="evidence" value="ECO:0007669"/>
    <property type="project" value="InterPro"/>
</dbReference>
<dbReference type="CDD" id="cd00959">
    <property type="entry name" value="DeoC"/>
    <property type="match status" value="1"/>
</dbReference>
<dbReference type="FunFam" id="3.20.20.70:FF:000034">
    <property type="entry name" value="Deoxyribose-phosphate aldolase"/>
    <property type="match status" value="1"/>
</dbReference>
<dbReference type="Gene3D" id="3.20.20.70">
    <property type="entry name" value="Aldolase class I"/>
    <property type="match status" value="1"/>
</dbReference>
<dbReference type="HAMAP" id="MF_00592">
    <property type="entry name" value="DeoC_type2"/>
    <property type="match status" value="1"/>
</dbReference>
<dbReference type="InterPro" id="IPR013785">
    <property type="entry name" value="Aldolase_TIM"/>
</dbReference>
<dbReference type="InterPro" id="IPR011343">
    <property type="entry name" value="DeoC"/>
</dbReference>
<dbReference type="InterPro" id="IPR002915">
    <property type="entry name" value="DeoC/FbaB/LacD_aldolase"/>
</dbReference>
<dbReference type="InterPro" id="IPR023649">
    <property type="entry name" value="DeoC_typeII"/>
</dbReference>
<dbReference type="NCBIfam" id="TIGR00126">
    <property type="entry name" value="deoC"/>
    <property type="match status" value="1"/>
</dbReference>
<dbReference type="PANTHER" id="PTHR10889">
    <property type="entry name" value="DEOXYRIBOSE-PHOSPHATE ALDOLASE"/>
    <property type="match status" value="1"/>
</dbReference>
<dbReference type="PANTHER" id="PTHR10889:SF3">
    <property type="entry name" value="DEOXYRIBOSE-PHOSPHATE ALDOLASE"/>
    <property type="match status" value="1"/>
</dbReference>
<dbReference type="Pfam" id="PF01791">
    <property type="entry name" value="DeoC"/>
    <property type="match status" value="1"/>
</dbReference>
<dbReference type="PIRSF" id="PIRSF001357">
    <property type="entry name" value="DeoC"/>
    <property type="match status" value="1"/>
</dbReference>
<dbReference type="SMART" id="SM01133">
    <property type="entry name" value="DeoC"/>
    <property type="match status" value="1"/>
</dbReference>
<dbReference type="SUPFAM" id="SSF51569">
    <property type="entry name" value="Aldolase"/>
    <property type="match status" value="1"/>
</dbReference>
<comment type="function">
    <text evidence="1">Catalyzes a reversible aldol reaction between acetaldehyde and D-glyceraldehyde 3-phosphate to generate 2-deoxy-D-ribose 5-phosphate.</text>
</comment>
<comment type="catalytic activity">
    <reaction evidence="1">
        <text>2-deoxy-D-ribose 5-phosphate = D-glyceraldehyde 3-phosphate + acetaldehyde</text>
        <dbReference type="Rhea" id="RHEA:12821"/>
        <dbReference type="ChEBI" id="CHEBI:15343"/>
        <dbReference type="ChEBI" id="CHEBI:59776"/>
        <dbReference type="ChEBI" id="CHEBI:62877"/>
        <dbReference type="EC" id="4.1.2.4"/>
    </reaction>
</comment>
<comment type="pathway">
    <text evidence="1">Carbohydrate degradation; 2-deoxy-D-ribose 1-phosphate degradation; D-glyceraldehyde 3-phosphate and acetaldehyde from 2-deoxy-alpha-D-ribose 1-phosphate: step 2/2.</text>
</comment>
<comment type="subcellular location">
    <subcellularLocation>
        <location evidence="1">Cytoplasm</location>
    </subcellularLocation>
</comment>
<comment type="similarity">
    <text evidence="1">Belongs to the DeoC/FbaB aldolase family. DeoC type 2 subfamily.</text>
</comment>
<keyword id="KW-0963">Cytoplasm</keyword>
<keyword id="KW-0456">Lyase</keyword>
<keyword id="KW-0704">Schiff base</keyword>
<accession>Q8DBT2</accession>
<sequence length="258" mass="27782">MSDLKAAALRALKLMDLTTLNDDDTDAKVIALCHDAKTPVGNTAAICIYPRFIPIAKKTLREQGTPEVRIATVTNFPYGNDDIEIAVAETKAAVAYGADEVDVVFPYRALMAGDEKVGFELVKQCKEACGDILLKVIIETGELKEEALIKKASQICIEAGADFIKTSTGKVPVNATPEYARMMLEVIRDMGVAEKVGFKPAGGVRTAEDAAAYLAMADDILGSEWADNMHYRFGASSLLTNLLNTLEVTDQVADPAAY</sequence>
<reference key="1">
    <citation type="submission" date="2002-12" db="EMBL/GenBank/DDBJ databases">
        <title>Complete genome sequence of Vibrio vulnificus CMCP6.</title>
        <authorList>
            <person name="Rhee J.H."/>
            <person name="Kim S.Y."/>
            <person name="Chung S.S."/>
            <person name="Kim J.J."/>
            <person name="Moon Y.H."/>
            <person name="Jeong H."/>
            <person name="Choy H.E."/>
        </authorList>
    </citation>
    <scope>NUCLEOTIDE SEQUENCE [LARGE SCALE GENOMIC DNA]</scope>
    <source>
        <strain>CMCP6</strain>
    </source>
</reference>